<protein>
    <recommendedName>
        <fullName evidence="1">Ribonuclease VapC</fullName>
        <shortName evidence="1">RNase VapC</shortName>
        <ecNumber evidence="1">3.1.-.-</ecNumber>
    </recommendedName>
    <alternativeName>
        <fullName evidence="1">Toxin VapC</fullName>
    </alternativeName>
</protein>
<keyword id="KW-0378">Hydrolase</keyword>
<keyword id="KW-0460">Magnesium</keyword>
<keyword id="KW-0479">Metal-binding</keyword>
<keyword id="KW-0540">Nuclease</keyword>
<keyword id="KW-1277">Toxin-antitoxin system</keyword>
<reference key="1">
    <citation type="journal article" date="2005" name="J. Bacteriol.">
        <title>Genomic sequence of an otitis media isolate of nontypeable Haemophilus influenzae: comparative study with H. influenzae serotype d, strain KW20.</title>
        <authorList>
            <person name="Harrison A."/>
            <person name="Dyer D.W."/>
            <person name="Gillaspy A."/>
            <person name="Ray W.C."/>
            <person name="Mungur R."/>
            <person name="Carson M.B."/>
            <person name="Zhong H."/>
            <person name="Gipson J."/>
            <person name="Gipson M."/>
            <person name="Johnson L.S."/>
            <person name="Lewis L."/>
            <person name="Bakaletz L.O."/>
            <person name="Munson R.S. Jr."/>
        </authorList>
    </citation>
    <scope>NUCLEOTIDE SEQUENCE [LARGE SCALE GENOMIC DNA]</scope>
    <source>
        <strain>86-028NP</strain>
    </source>
</reference>
<reference key="2">
    <citation type="journal article" date="2016" name="J. Bacteriol.">
        <title>Structural determinants for antitoxin identity and insulation of cross talk between homologous toxin-antitoxin systems.</title>
        <authorList>
            <person name="Walling L.R."/>
            <person name="Butler J.S."/>
        </authorList>
    </citation>
    <scope>FUNCTION</scope>
    <source>
        <strain>86-028NP</strain>
    </source>
</reference>
<evidence type="ECO:0000255" key="1">
    <source>
        <dbReference type="HAMAP-Rule" id="MF_00265"/>
    </source>
</evidence>
<evidence type="ECO:0000269" key="2">
    <source>
    </source>
</evidence>
<evidence type="ECO:0000303" key="3">
    <source>
    </source>
</evidence>
<evidence type="ECO:0000305" key="4">
    <source>
    </source>
</evidence>
<comment type="function">
    <text evidence="1 2">Toxic component of a type II toxin-antitoxin (TA) system (PubMed:27672196). Acts as an RNase (Probable). Its toxic effect is neutralized by cognate antitoxin VapB2 but not by non-cognate antitoxin VapB1 (PubMed:27672196).</text>
</comment>
<comment type="cofactor">
    <cofactor evidence="1">
        <name>Mg(2+)</name>
        <dbReference type="ChEBI" id="CHEBI:18420"/>
    </cofactor>
</comment>
<comment type="subunit">
    <text evidence="4">Probably forms a complex with cognate antitoxin VapB2.</text>
</comment>
<comment type="similarity">
    <text evidence="1">Belongs to the PINc/VapC protein family.</text>
</comment>
<gene>
    <name evidence="1 3" type="primary">vapC</name>
    <name type="ordered locus">NTHI1120</name>
</gene>
<accession>Q4QLW0</accession>
<name>VAPC2_HAEI8</name>
<dbReference type="EC" id="3.1.-.-" evidence="1"/>
<dbReference type="EMBL" id="CP000057">
    <property type="protein sequence ID" value="AAX87987.1"/>
    <property type="molecule type" value="Genomic_DNA"/>
</dbReference>
<dbReference type="RefSeq" id="WP_005651560.1">
    <property type="nucleotide sequence ID" value="NC_007146.2"/>
</dbReference>
<dbReference type="SMR" id="Q4QLW0"/>
<dbReference type="GeneID" id="93219986"/>
<dbReference type="KEGG" id="hit:NTHI1120"/>
<dbReference type="HOGENOM" id="CLU_118482_5_3_6"/>
<dbReference type="Proteomes" id="UP000002525">
    <property type="component" value="Chromosome"/>
</dbReference>
<dbReference type="GO" id="GO:0000287">
    <property type="term" value="F:magnesium ion binding"/>
    <property type="evidence" value="ECO:0007669"/>
    <property type="project" value="UniProtKB-UniRule"/>
</dbReference>
<dbReference type="GO" id="GO:0004540">
    <property type="term" value="F:RNA nuclease activity"/>
    <property type="evidence" value="ECO:0007669"/>
    <property type="project" value="InterPro"/>
</dbReference>
<dbReference type="Gene3D" id="3.40.50.1010">
    <property type="entry name" value="5'-nuclease"/>
    <property type="match status" value="1"/>
</dbReference>
<dbReference type="HAMAP" id="MF_00265">
    <property type="entry name" value="VapC_Nob1"/>
    <property type="match status" value="1"/>
</dbReference>
<dbReference type="InterPro" id="IPR029060">
    <property type="entry name" value="PIN-like_dom_sf"/>
</dbReference>
<dbReference type="InterPro" id="IPR002716">
    <property type="entry name" value="PIN_dom"/>
</dbReference>
<dbReference type="InterPro" id="IPR050556">
    <property type="entry name" value="Type_II_TA_system_RNase"/>
</dbReference>
<dbReference type="InterPro" id="IPR022907">
    <property type="entry name" value="VapC_family"/>
</dbReference>
<dbReference type="NCBIfam" id="NF010285">
    <property type="entry name" value="PRK13725.1"/>
    <property type="match status" value="1"/>
</dbReference>
<dbReference type="PANTHER" id="PTHR33653">
    <property type="entry name" value="RIBONUCLEASE VAPC2"/>
    <property type="match status" value="1"/>
</dbReference>
<dbReference type="PANTHER" id="PTHR33653:SF1">
    <property type="entry name" value="RIBONUCLEASE VAPC2"/>
    <property type="match status" value="1"/>
</dbReference>
<dbReference type="Pfam" id="PF01850">
    <property type="entry name" value="PIN"/>
    <property type="match status" value="1"/>
</dbReference>
<dbReference type="SMART" id="SM00670">
    <property type="entry name" value="PINc"/>
    <property type="match status" value="1"/>
</dbReference>
<dbReference type="SUPFAM" id="SSF88723">
    <property type="entry name" value="PIN domain-like"/>
    <property type="match status" value="1"/>
</dbReference>
<sequence length="132" mass="15148">MLKYMLDTNIVIYVIKRRPLEILSRFNQNAGKMCVSSITVAELYYGAEKSEYPERNIAVIEDFLSRLTILDYQPKHAAHFGNIKAELSKQGKLIGENDIHIAAHARSEGLILVSNNLREFERVIALRTENWV</sequence>
<feature type="chain" id="PRO_0000440071" description="Ribonuclease VapC">
    <location>
        <begin position="1"/>
        <end position="132"/>
    </location>
</feature>
<feature type="domain" description="PINc" evidence="1">
    <location>
        <begin position="4"/>
        <end position="123"/>
    </location>
</feature>
<feature type="binding site" evidence="1">
    <location>
        <position position="7"/>
    </location>
    <ligand>
        <name>Mg(2+)</name>
        <dbReference type="ChEBI" id="CHEBI:18420"/>
    </ligand>
</feature>
<feature type="binding site" evidence="1">
    <location>
        <position position="98"/>
    </location>
    <ligand>
        <name>Mg(2+)</name>
        <dbReference type="ChEBI" id="CHEBI:18420"/>
    </ligand>
</feature>
<organism>
    <name type="scientific">Haemophilus influenzae (strain 86-028NP)</name>
    <dbReference type="NCBI Taxonomy" id="281310"/>
    <lineage>
        <taxon>Bacteria</taxon>
        <taxon>Pseudomonadati</taxon>
        <taxon>Pseudomonadota</taxon>
        <taxon>Gammaproteobacteria</taxon>
        <taxon>Pasteurellales</taxon>
        <taxon>Pasteurellaceae</taxon>
        <taxon>Haemophilus</taxon>
    </lineage>
</organism>
<proteinExistence type="inferred from homology"/>